<dbReference type="EC" id="2.7.3.3"/>
<dbReference type="EMBL" id="AF233355">
    <property type="protein sequence ID" value="AAF43436.1"/>
    <property type="molecule type" value="mRNA"/>
</dbReference>
<dbReference type="SMR" id="Q9NH49"/>
<dbReference type="GO" id="GO:0005615">
    <property type="term" value="C:extracellular space"/>
    <property type="evidence" value="ECO:0007669"/>
    <property type="project" value="TreeGrafter"/>
</dbReference>
<dbReference type="GO" id="GO:0004054">
    <property type="term" value="F:arginine kinase activity"/>
    <property type="evidence" value="ECO:0000250"/>
    <property type="project" value="UniProtKB"/>
</dbReference>
<dbReference type="GO" id="GO:0005524">
    <property type="term" value="F:ATP binding"/>
    <property type="evidence" value="ECO:0007669"/>
    <property type="project" value="UniProtKB-KW"/>
</dbReference>
<dbReference type="GO" id="GO:0004111">
    <property type="term" value="F:creatine kinase activity"/>
    <property type="evidence" value="ECO:0007669"/>
    <property type="project" value="InterPro"/>
</dbReference>
<dbReference type="GO" id="GO:0046314">
    <property type="term" value="P:phosphocreatine biosynthetic process"/>
    <property type="evidence" value="ECO:0007669"/>
    <property type="project" value="InterPro"/>
</dbReference>
<dbReference type="CDD" id="cd07932">
    <property type="entry name" value="arginine_kinase_like"/>
    <property type="match status" value="1"/>
</dbReference>
<dbReference type="FunFam" id="3.30.590.10:FF:000006">
    <property type="entry name" value="Arginine kinase 1"/>
    <property type="match status" value="1"/>
</dbReference>
<dbReference type="FunFam" id="1.10.135.10:FF:000003">
    <property type="entry name" value="Three-domain arginine kinase"/>
    <property type="match status" value="1"/>
</dbReference>
<dbReference type="Gene3D" id="1.10.135.10">
    <property type="entry name" value="ATP:guanido phosphotransferase, N-terminal domain"/>
    <property type="match status" value="1"/>
</dbReference>
<dbReference type="Gene3D" id="3.30.590.10">
    <property type="entry name" value="Glutamine synthetase/guanido kinase, catalytic domain"/>
    <property type="match status" value="1"/>
</dbReference>
<dbReference type="InterPro" id="IPR000749">
    <property type="entry name" value="ATP-guanido_PTrfase"/>
</dbReference>
<dbReference type="InterPro" id="IPR022415">
    <property type="entry name" value="ATP-guanido_PTrfase_AS"/>
</dbReference>
<dbReference type="InterPro" id="IPR022414">
    <property type="entry name" value="ATP-guanido_PTrfase_cat"/>
</dbReference>
<dbReference type="InterPro" id="IPR022413">
    <property type="entry name" value="ATP-guanido_PTrfase_N"/>
</dbReference>
<dbReference type="InterPro" id="IPR036802">
    <property type="entry name" value="ATP-guanido_PTrfase_N_sf"/>
</dbReference>
<dbReference type="InterPro" id="IPR014746">
    <property type="entry name" value="Gln_synth/guanido_kin_cat_dom"/>
</dbReference>
<dbReference type="PANTHER" id="PTHR11547:SF38">
    <property type="entry name" value="ARGININE KINASE 1-RELATED"/>
    <property type="match status" value="1"/>
</dbReference>
<dbReference type="PANTHER" id="PTHR11547">
    <property type="entry name" value="ARGININE OR CREATINE KINASE"/>
    <property type="match status" value="1"/>
</dbReference>
<dbReference type="Pfam" id="PF00217">
    <property type="entry name" value="ATP-gua_Ptrans"/>
    <property type="match status" value="1"/>
</dbReference>
<dbReference type="Pfam" id="PF02807">
    <property type="entry name" value="ATP-gua_PtransN"/>
    <property type="match status" value="1"/>
</dbReference>
<dbReference type="SUPFAM" id="SSF55931">
    <property type="entry name" value="Glutamine synthetase/guanido kinase"/>
    <property type="match status" value="1"/>
</dbReference>
<dbReference type="SUPFAM" id="SSF48034">
    <property type="entry name" value="Guanido kinase N-terminal domain"/>
    <property type="match status" value="1"/>
</dbReference>
<dbReference type="PROSITE" id="PS00112">
    <property type="entry name" value="PHOSPHAGEN_KINASE"/>
    <property type="match status" value="1"/>
</dbReference>
<dbReference type="PROSITE" id="PS51510">
    <property type="entry name" value="PHOSPHAGEN_KINASE_C"/>
    <property type="match status" value="1"/>
</dbReference>
<dbReference type="PROSITE" id="PS51509">
    <property type="entry name" value="PHOSPHAGEN_KINASE_N"/>
    <property type="match status" value="1"/>
</dbReference>
<accession>Q9NH49</accession>
<comment type="catalytic activity">
    <reaction>
        <text>L-arginine + ATP = N(omega)-phospho-L-arginine + ADP + H(+)</text>
        <dbReference type="Rhea" id="RHEA:22940"/>
        <dbReference type="ChEBI" id="CHEBI:15378"/>
        <dbReference type="ChEBI" id="CHEBI:30616"/>
        <dbReference type="ChEBI" id="CHEBI:32682"/>
        <dbReference type="ChEBI" id="CHEBI:58477"/>
        <dbReference type="ChEBI" id="CHEBI:456216"/>
        <dbReference type="EC" id="2.7.3.3"/>
    </reaction>
</comment>
<comment type="similarity">
    <text evidence="3 4">Belongs to the ATP:guanido phosphotransferase family.</text>
</comment>
<feature type="initiator methionine" description="Removed" evidence="1">
    <location>
        <position position="1"/>
    </location>
</feature>
<feature type="chain" id="PRO_0000211996" description="Arginine kinase">
    <location>
        <begin position="2"/>
        <end position="357"/>
    </location>
</feature>
<feature type="domain" description="Phosphagen kinase N-terminal" evidence="3">
    <location>
        <begin position="9"/>
        <end position="91"/>
    </location>
</feature>
<feature type="domain" description="Phosphagen kinase C-terminal" evidence="4">
    <location>
        <begin position="119"/>
        <end position="356"/>
    </location>
</feature>
<feature type="binding site" evidence="2">
    <location>
        <begin position="64"/>
        <end position="68"/>
    </location>
    <ligand>
        <name>L-arginine</name>
        <dbReference type="ChEBI" id="CHEBI:32682"/>
    </ligand>
</feature>
<feature type="binding site" evidence="4">
    <location>
        <begin position="122"/>
        <end position="126"/>
    </location>
    <ligand>
        <name>ATP</name>
        <dbReference type="ChEBI" id="CHEBI:30616"/>
    </ligand>
</feature>
<feature type="binding site" evidence="4">
    <location>
        <position position="185"/>
    </location>
    <ligand>
        <name>ATP</name>
        <dbReference type="ChEBI" id="CHEBI:30616"/>
    </ligand>
</feature>
<feature type="binding site" evidence="2">
    <location>
        <position position="225"/>
    </location>
    <ligand>
        <name>L-arginine</name>
        <dbReference type="ChEBI" id="CHEBI:32682"/>
    </ligand>
</feature>
<feature type="binding site" evidence="4">
    <location>
        <position position="229"/>
    </location>
    <ligand>
        <name>ATP</name>
        <dbReference type="ChEBI" id="CHEBI:30616"/>
    </ligand>
</feature>
<feature type="binding site" evidence="2">
    <location>
        <position position="271"/>
    </location>
    <ligand>
        <name>L-arginine</name>
        <dbReference type="ChEBI" id="CHEBI:32682"/>
    </ligand>
</feature>
<feature type="binding site" evidence="4">
    <location>
        <begin position="280"/>
        <end position="284"/>
    </location>
    <ligand>
        <name>ATP</name>
        <dbReference type="ChEBI" id="CHEBI:30616"/>
    </ligand>
</feature>
<feature type="binding site" evidence="4">
    <location>
        <begin position="309"/>
        <end position="314"/>
    </location>
    <ligand>
        <name>ATP</name>
        <dbReference type="ChEBI" id="CHEBI:30616"/>
    </ligand>
</feature>
<feature type="binding site" evidence="2">
    <location>
        <position position="314"/>
    </location>
    <ligand>
        <name>L-arginine</name>
        <dbReference type="ChEBI" id="CHEBI:32682"/>
    </ligand>
</feature>
<feature type="modified residue" description="N-acetylalanine" evidence="1">
    <location>
        <position position="2"/>
    </location>
</feature>
<evidence type="ECO:0000250" key="1"/>
<evidence type="ECO:0000250" key="2">
    <source>
        <dbReference type="UniProtKB" id="Q004B5"/>
    </source>
</evidence>
<evidence type="ECO:0000255" key="3">
    <source>
        <dbReference type="PROSITE-ProRule" id="PRU00842"/>
    </source>
</evidence>
<evidence type="ECO:0000255" key="4">
    <source>
        <dbReference type="PROSITE-ProRule" id="PRU00843"/>
    </source>
</evidence>
<organism>
    <name type="scientific">Callinectes sapidus</name>
    <name type="common">Blue crab</name>
    <dbReference type="NCBI Taxonomy" id="6763"/>
    <lineage>
        <taxon>Eukaryota</taxon>
        <taxon>Metazoa</taxon>
        <taxon>Ecdysozoa</taxon>
        <taxon>Arthropoda</taxon>
        <taxon>Crustacea</taxon>
        <taxon>Multicrustacea</taxon>
        <taxon>Malacostraca</taxon>
        <taxon>Eumalacostraca</taxon>
        <taxon>Eucarida</taxon>
        <taxon>Decapoda</taxon>
        <taxon>Pleocyemata</taxon>
        <taxon>Brachyura</taxon>
        <taxon>Eubrachyura</taxon>
        <taxon>Portunoidea</taxon>
        <taxon>Portunidae</taxon>
        <taxon>Portuninae</taxon>
        <taxon>Callinectes</taxon>
    </lineage>
</organism>
<name>KARG_CALSI</name>
<keyword id="KW-0007">Acetylation</keyword>
<keyword id="KW-0067">ATP-binding</keyword>
<keyword id="KW-0418">Kinase</keyword>
<keyword id="KW-0547">Nucleotide-binding</keyword>
<keyword id="KW-0808">Transferase</keyword>
<proteinExistence type="evidence at transcript level"/>
<protein>
    <recommendedName>
        <fullName>Arginine kinase</fullName>
        <shortName>AK</shortName>
        <ecNumber>2.7.3.3</ecNumber>
    </recommendedName>
</protein>
<sequence length="357" mass="40315">MADAATIAKLEEGFKKLEAATDCKSLLKKYLTKSVFDQLKDKKTSLGATLLDVIQSGVENLDSGVGVYAPDAEAYTLFAPLFDPIIEDYHKGFKQTDKHPNKDFGDVNQFVNVDPDGKFVISTRVRCGRSMEGYPFNPCLTEAQYKEMESKVSSTLSNLEGELKGTYFPLTGMTKEVQQKLIDDHFLFKEGDRFLQAANACRYWPTGRGIYHNDNKTFLVWCNEEDHLRIISMQMGGDLGQVYRRLVSAVNEIEKRVPFSHHDRLGFLTFCPTNLGTTVRASVHIKLPKLAANREKLEEVAGKYSLQVRGTRGEHTEAEGGVYDISNKRRMGLTEYQAVKEMQDGILELIKIEKEMQ</sequence>
<reference key="1">
    <citation type="submission" date="2000-02" db="EMBL/GenBank/DDBJ databases">
        <title>Arginine kinase mRNA expression analysis in different haline species of crustaceans.</title>
        <authorList>
            <person name="Weihrauch D."/>
            <person name="Towle D.W."/>
        </authorList>
    </citation>
    <scope>NUCLEOTIDE SEQUENCE [MRNA]</scope>
    <source>
        <tissue>Gill</tissue>
    </source>
</reference>